<reference key="1">
    <citation type="journal article" date="1999" name="DNA Res.">
        <title>Complete genome sequence of an aerobic hyper-thermophilic crenarchaeon, Aeropyrum pernix K1.</title>
        <authorList>
            <person name="Kawarabayasi Y."/>
            <person name="Hino Y."/>
            <person name="Horikawa H."/>
            <person name="Yamazaki S."/>
            <person name="Haikawa Y."/>
            <person name="Jin-no K."/>
            <person name="Takahashi M."/>
            <person name="Sekine M."/>
            <person name="Baba S."/>
            <person name="Ankai A."/>
            <person name="Kosugi H."/>
            <person name="Hosoyama A."/>
            <person name="Fukui S."/>
            <person name="Nagai Y."/>
            <person name="Nishijima K."/>
            <person name="Nakazawa H."/>
            <person name="Takamiya M."/>
            <person name="Masuda S."/>
            <person name="Funahashi T."/>
            <person name="Tanaka T."/>
            <person name="Kudoh Y."/>
            <person name="Yamazaki J."/>
            <person name="Kushida N."/>
            <person name="Oguchi A."/>
            <person name="Aoki K."/>
            <person name="Kubota K."/>
            <person name="Nakamura Y."/>
            <person name="Nomura N."/>
            <person name="Sako Y."/>
            <person name="Kikuchi H."/>
        </authorList>
    </citation>
    <scope>NUCLEOTIDE SEQUENCE [LARGE SCALE GENOMIC DNA]</scope>
    <source>
        <strain>ATCC 700893 / DSM 11879 / JCM 9820 / NBRC 100138 / K1</strain>
    </source>
</reference>
<accession>P57676</accession>
<accession>Q05E50</accession>
<gene>
    <name type="primary">eIF1A</name>
    <name type="ordered locus">APE_0749.1</name>
</gene>
<feature type="chain" id="PRO_0000145114" description="Translation initiation factor 1A">
    <location>
        <begin position="1"/>
        <end position="111"/>
    </location>
</feature>
<feature type="domain" description="S1-like">
    <location>
        <begin position="12"/>
        <end position="86"/>
    </location>
</feature>
<keyword id="KW-0396">Initiation factor</keyword>
<keyword id="KW-0648">Protein biosynthesis</keyword>
<keyword id="KW-1185">Reference proteome</keyword>
<comment type="function">
    <text evidence="1">Seems to be required for maximal rate of protein biosynthesis. Enhances ribosome dissociation into subunits and stabilizes the binding of the initiator Met-tRNA(I) to 40 S ribosomal subunits (By similarity).</text>
</comment>
<comment type="similarity">
    <text evidence="2">Belongs to the eIF-1A family.</text>
</comment>
<evidence type="ECO:0000250" key="1"/>
<evidence type="ECO:0000305" key="2"/>
<sequence length="111" mass="12736">MARGRGRHERRGEMPLPSEDEGTMLCIVQRVVGAGFLEVLCTDGEVYMARIPGKMRRRVWMREGDVVLFLPWGTADKKGEVVYRYLRDEVRKLIDMNLLPEELVEEVAGAE</sequence>
<name>IF1A_AERPE</name>
<protein>
    <recommendedName>
        <fullName>Translation initiation factor 1A</fullName>
        <shortName>aIF-1A</shortName>
    </recommendedName>
</protein>
<organism>
    <name type="scientific">Aeropyrum pernix (strain ATCC 700893 / DSM 11879 / JCM 9820 / NBRC 100138 / K1)</name>
    <dbReference type="NCBI Taxonomy" id="272557"/>
    <lineage>
        <taxon>Archaea</taxon>
        <taxon>Thermoproteota</taxon>
        <taxon>Thermoprotei</taxon>
        <taxon>Desulfurococcales</taxon>
        <taxon>Desulfurococcaceae</taxon>
        <taxon>Aeropyrum</taxon>
    </lineage>
</organism>
<dbReference type="EMBL" id="BA000002">
    <property type="protein sequence ID" value="BAF34751.1"/>
    <property type="molecule type" value="Genomic_DNA"/>
</dbReference>
<dbReference type="RefSeq" id="WP_010865948.1">
    <property type="nucleotide sequence ID" value="NC_000854.2"/>
</dbReference>
<dbReference type="SMR" id="P57676"/>
<dbReference type="STRING" id="272557.APE_0748a"/>
<dbReference type="EnsemblBacteria" id="BAF34751">
    <property type="protein sequence ID" value="BAF34751"/>
    <property type="gene ID" value="APE_0748a"/>
</dbReference>
<dbReference type="GeneID" id="4525333"/>
<dbReference type="KEGG" id="ape:APE_0748a"/>
<dbReference type="eggNOG" id="arCOG01179">
    <property type="taxonomic scope" value="Archaea"/>
</dbReference>
<dbReference type="Proteomes" id="UP000002518">
    <property type="component" value="Chromosome"/>
</dbReference>
<dbReference type="GO" id="GO:0003723">
    <property type="term" value="F:RNA binding"/>
    <property type="evidence" value="ECO:0007669"/>
    <property type="project" value="InterPro"/>
</dbReference>
<dbReference type="GO" id="GO:0003743">
    <property type="term" value="F:translation initiation factor activity"/>
    <property type="evidence" value="ECO:0007669"/>
    <property type="project" value="UniProtKB-UniRule"/>
</dbReference>
<dbReference type="CDD" id="cd05793">
    <property type="entry name" value="S1_IF1A"/>
    <property type="match status" value="1"/>
</dbReference>
<dbReference type="Gene3D" id="2.40.50.140">
    <property type="entry name" value="Nucleic acid-binding proteins"/>
    <property type="match status" value="1"/>
</dbReference>
<dbReference type="HAMAP" id="MF_00216">
    <property type="entry name" value="aIF_1A"/>
    <property type="match status" value="1"/>
</dbReference>
<dbReference type="InterPro" id="IPR012340">
    <property type="entry name" value="NA-bd_OB-fold"/>
</dbReference>
<dbReference type="InterPro" id="IPR006196">
    <property type="entry name" value="RNA-binding_domain_S1_IF1"/>
</dbReference>
<dbReference type="InterPro" id="IPR001253">
    <property type="entry name" value="TIF_eIF-1A"/>
</dbReference>
<dbReference type="InterPro" id="IPR018104">
    <property type="entry name" value="TIF_eIF-1A_CS"/>
</dbReference>
<dbReference type="NCBIfam" id="NF003082">
    <property type="entry name" value="PRK04012.1-1"/>
    <property type="match status" value="1"/>
</dbReference>
<dbReference type="NCBIfam" id="NF003084">
    <property type="entry name" value="PRK04012.1-3"/>
    <property type="match status" value="1"/>
</dbReference>
<dbReference type="PANTHER" id="PTHR21668">
    <property type="entry name" value="EIF-1A"/>
    <property type="match status" value="1"/>
</dbReference>
<dbReference type="Pfam" id="PF01176">
    <property type="entry name" value="eIF-1a"/>
    <property type="match status" value="1"/>
</dbReference>
<dbReference type="SMART" id="SM00652">
    <property type="entry name" value="eIF1a"/>
    <property type="match status" value="1"/>
</dbReference>
<dbReference type="SUPFAM" id="SSF50249">
    <property type="entry name" value="Nucleic acid-binding proteins"/>
    <property type="match status" value="1"/>
</dbReference>
<dbReference type="PROSITE" id="PS01262">
    <property type="entry name" value="IF1A"/>
    <property type="match status" value="1"/>
</dbReference>
<dbReference type="PROSITE" id="PS50832">
    <property type="entry name" value="S1_IF1_TYPE"/>
    <property type="match status" value="1"/>
</dbReference>
<proteinExistence type="inferred from homology"/>